<dbReference type="EMBL" id="KU307456">
    <property type="protein sequence ID" value="AML61167.1"/>
    <property type="molecule type" value="Genomic_DNA"/>
</dbReference>
<dbReference type="RefSeq" id="YP_009237237.1">
    <property type="nucleotide sequence ID" value="NC_029548.1"/>
</dbReference>
<dbReference type="EMDB" id="EMD-21094"/>
<dbReference type="SMR" id="A0A140F3K7"/>
<dbReference type="GeneID" id="30313573"/>
<dbReference type="KEGG" id="vg:30313573"/>
<dbReference type="Proteomes" id="UP000202991">
    <property type="component" value="Segment"/>
</dbReference>
<dbReference type="GO" id="GO:0044423">
    <property type="term" value="C:virion component"/>
    <property type="evidence" value="ECO:0007669"/>
    <property type="project" value="UniProtKB-KW"/>
</dbReference>
<dbReference type="GO" id="GO:0003677">
    <property type="term" value="F:DNA binding"/>
    <property type="evidence" value="ECO:0007669"/>
    <property type="project" value="UniProtKB-KW"/>
</dbReference>
<accession>A0A140F3K7</accession>
<name>CAPS2_PFV1</name>
<reference key="1">
    <citation type="journal article" date="2016" name="Proc. Natl. Acad. Sci. U.S.A.">
        <title>A virus of hyperthermophilic archaea with a unique architecture among DNA viruses.</title>
        <authorList>
            <person name="Rensen E.I."/>
            <person name="Mochizuki T."/>
            <person name="Quemin E."/>
            <person name="Schouten S."/>
            <person name="Krupovic M."/>
            <person name="Prangishvili D."/>
        </authorList>
    </citation>
    <scope>NUCLEOTIDE SEQUENCE [LARGE SCALE GENOMIC DNA]</scope>
    <scope>SUBCELLULAR LOCATION</scope>
    <source>
        <strain evidence="4">1</strain>
    </source>
</reference>
<feature type="chain" id="PRO_0000453810" description="Major capsid protein 2">
    <location>
        <begin position="1"/>
        <end position="145"/>
    </location>
</feature>
<feature type="disulfide bond" evidence="1">
    <location>
        <begin position="96"/>
        <end position="107"/>
    </location>
</feature>
<organism>
    <name type="scientific">Pyrobaculum filamentous virus 1</name>
    <name type="common">PFV1</name>
    <dbReference type="NCBI Taxonomy" id="1805492"/>
    <lineage>
        <taxon>Viruses</taxon>
        <taxon>Adnaviria</taxon>
        <taxon>Zilligvirae</taxon>
        <taxon>Taleaviricota</taxon>
        <taxon>Tokiviricetes</taxon>
        <taxon>Primavirales</taxon>
        <taxon>Tristromaviridae</taxon>
        <taxon>Alphatristromavirus</taxon>
        <taxon>Alphatristromavirus pozzuoliense</taxon>
    </lineage>
</organism>
<sequence>MSVEVYRQKIEKGGYSAAYEATRRYERGEIEVLSWSSRWESAWSKFGEAVKALGKIEGAPRALVIAKVQEALAYMSKPLPNMKLAMAAAVQAVRACEQLPGMNRERCLDAVAGALGVAKDWIRREMTGGGGGGGGGGGGGGGAVV</sequence>
<comment type="function">
    <text evidence="1">Self-assembles to form a helical, filamentous nucleocapsid. Together with capsid protein 2, wraps arounds the DNA and maintains it in an A-form. Capsid proteins probably maintain the DNA in A-form by non-specific desolvation and specific coordination of the DNA phosphate groups by positively charged residues. This certainly protects the viral DNA under conditions such as the extreme desiccation of its host.</text>
</comment>
<comment type="subunit">
    <text evidence="1">Heterodimer composed of major capsid protein 1 and major capsid protein 2.</text>
</comment>
<comment type="subcellular location">
    <subcellularLocation>
        <location evidence="2">Virion</location>
    </subcellularLocation>
</comment>
<protein>
    <recommendedName>
        <fullName evidence="1">Major capsid protein 2</fullName>
    </recommendedName>
    <alternativeName>
        <fullName evidence="1">MCP2</fullName>
    </alternativeName>
    <alternativeName>
        <fullName evidence="3">Major capsid protein VP2</fullName>
    </alternativeName>
</protein>
<keyword id="KW-1015">Disulfide bond</keyword>
<keyword id="KW-0238">DNA-binding</keyword>
<keyword id="KW-0946">Virion</keyword>
<evidence type="ECO:0000250" key="1">
    <source>
        <dbReference type="UniProtKB" id="A0A6M3VWZ7"/>
    </source>
</evidence>
<evidence type="ECO:0000269" key="2">
    <source>
    </source>
</evidence>
<evidence type="ECO:0000303" key="3">
    <source>
    </source>
</evidence>
<evidence type="ECO:0000312" key="4">
    <source>
        <dbReference type="EMBL" id="AML61167.1"/>
    </source>
</evidence>
<proteinExistence type="inferred from homology"/>